<sequence length="311" mass="33612">MSTSQTVHDVIIIGSGPAGYTAAIYAARAQLKPLVFEGTQFGGALMTTTEVENYPGFREGITGPELMDQMREQALRFRADLRMEDVDAVQLEGPVKTVVVGDETHQARAVILAMGAAARHLGVPGEEALTGMGVSTCATCDGFFFRDQDIVVVGGGDSAMEEATFLTRFARSVTLIHRRDEFRASKIMLERARANEKITFLTNTEITQIEGDPKVTGVRLRDTVTGEESKLDVTGVFVAIGHDPRSELVRGQVELDDEGYVKVQGRTTYTSLDGVFAAGDLVDHTYRQAITAAGSGCAASIDAERWLAEQD</sequence>
<evidence type="ECO:0000250" key="1"/>
<evidence type="ECO:0000250" key="2">
    <source>
        <dbReference type="UniProtKB" id="P9WHH1"/>
    </source>
</evidence>
<evidence type="ECO:0000303" key="3">
    <source>
    </source>
</evidence>
<evidence type="ECO:0000305" key="4"/>
<keyword id="KW-0963">Cytoplasm</keyword>
<keyword id="KW-1015">Disulfide bond</keyword>
<keyword id="KW-0274">FAD</keyword>
<keyword id="KW-0285">Flavoprotein</keyword>
<keyword id="KW-0521">NADP</keyword>
<keyword id="KW-0560">Oxidoreductase</keyword>
<keyword id="KW-0676">Redox-active center</keyword>
<protein>
    <recommendedName>
        <fullName>Thioredoxin reductase</fullName>
        <shortName>TRXR</shortName>
        <ecNumber evidence="2">1.8.1.9</ecNumber>
    </recommendedName>
</protein>
<reference key="1">
    <citation type="journal article" date="1998" name="Res. Microbiol.">
        <title>Molecular characterization of the thioredoxin system of Mycobacterium smegmatis.</title>
        <authorList>
            <person name="Asano R.L."/>
            <person name="Davies J."/>
        </authorList>
    </citation>
    <scope>NUCLEOTIDE SEQUENCE [GENOMIC DNA]</scope>
    <source>
        <strain>ATCC 607 / DSM 43465 / JCM 20379 / NBRC 3207 / NRRL B-692</strain>
    </source>
</reference>
<proteinExistence type="inferred from homology"/>
<comment type="catalytic activity">
    <reaction evidence="2">
        <text>[thioredoxin]-dithiol + NADP(+) = [thioredoxin]-disulfide + NADPH + H(+)</text>
        <dbReference type="Rhea" id="RHEA:20345"/>
        <dbReference type="Rhea" id="RHEA-COMP:10698"/>
        <dbReference type="Rhea" id="RHEA-COMP:10700"/>
        <dbReference type="ChEBI" id="CHEBI:15378"/>
        <dbReference type="ChEBI" id="CHEBI:29950"/>
        <dbReference type="ChEBI" id="CHEBI:50058"/>
        <dbReference type="ChEBI" id="CHEBI:57783"/>
        <dbReference type="ChEBI" id="CHEBI:58349"/>
        <dbReference type="EC" id="1.8.1.9"/>
    </reaction>
</comment>
<comment type="cofactor">
    <cofactor evidence="2">
        <name>FAD</name>
        <dbReference type="ChEBI" id="CHEBI:57692"/>
    </cofactor>
    <text evidence="2">Binds 1 FAD per subunit.</text>
</comment>
<comment type="subunit">
    <text evidence="2">Homodimer.</text>
</comment>
<comment type="subcellular location">
    <subcellularLocation>
        <location evidence="1">Cytoplasm</location>
    </subcellularLocation>
</comment>
<comment type="miscellaneous">
    <text evidence="2">The active site is a redox-active disulfide bond.</text>
</comment>
<comment type="similarity">
    <text evidence="4">Belongs to the class-II pyridine nucleotide-disulfide oxidoreductase family.</text>
</comment>
<name>TRXB_MYCSM</name>
<dbReference type="EC" id="1.8.1.9" evidence="2"/>
<dbReference type="EMBL" id="AF023161">
    <property type="protein sequence ID" value="AAB80939.1"/>
    <property type="molecule type" value="Genomic_DNA"/>
</dbReference>
<dbReference type="SMR" id="O30973"/>
<dbReference type="GO" id="GO:0005737">
    <property type="term" value="C:cytoplasm"/>
    <property type="evidence" value="ECO:0007669"/>
    <property type="project" value="UniProtKB-SubCell"/>
</dbReference>
<dbReference type="GO" id="GO:0004791">
    <property type="term" value="F:thioredoxin-disulfide reductase (NADPH) activity"/>
    <property type="evidence" value="ECO:0007669"/>
    <property type="project" value="UniProtKB-EC"/>
</dbReference>
<dbReference type="GO" id="GO:0019430">
    <property type="term" value="P:removal of superoxide radicals"/>
    <property type="evidence" value="ECO:0007669"/>
    <property type="project" value="InterPro"/>
</dbReference>
<dbReference type="Gene3D" id="3.50.50.60">
    <property type="entry name" value="FAD/NAD(P)-binding domain"/>
    <property type="match status" value="2"/>
</dbReference>
<dbReference type="InterPro" id="IPR036188">
    <property type="entry name" value="FAD/NAD-bd_sf"/>
</dbReference>
<dbReference type="InterPro" id="IPR023753">
    <property type="entry name" value="FAD/NAD-binding_dom"/>
</dbReference>
<dbReference type="InterPro" id="IPR050097">
    <property type="entry name" value="Ferredoxin-NADP_redctase_2"/>
</dbReference>
<dbReference type="InterPro" id="IPR008255">
    <property type="entry name" value="Pyr_nucl-diS_OxRdtase_2_AS"/>
</dbReference>
<dbReference type="InterPro" id="IPR005982">
    <property type="entry name" value="Thioredox_Rdtase"/>
</dbReference>
<dbReference type="NCBIfam" id="TIGR01292">
    <property type="entry name" value="TRX_reduct"/>
    <property type="match status" value="1"/>
</dbReference>
<dbReference type="PANTHER" id="PTHR48105">
    <property type="entry name" value="THIOREDOXIN REDUCTASE 1-RELATED-RELATED"/>
    <property type="match status" value="1"/>
</dbReference>
<dbReference type="Pfam" id="PF07992">
    <property type="entry name" value="Pyr_redox_2"/>
    <property type="match status" value="1"/>
</dbReference>
<dbReference type="PRINTS" id="PR00368">
    <property type="entry name" value="FADPNR"/>
</dbReference>
<dbReference type="PRINTS" id="PR00469">
    <property type="entry name" value="PNDRDTASEII"/>
</dbReference>
<dbReference type="SUPFAM" id="SSF51905">
    <property type="entry name" value="FAD/NAD(P)-binding domain"/>
    <property type="match status" value="1"/>
</dbReference>
<dbReference type="PROSITE" id="PS00573">
    <property type="entry name" value="PYRIDINE_REDOX_2"/>
    <property type="match status" value="1"/>
</dbReference>
<gene>
    <name evidence="3" type="primary">trxB</name>
</gene>
<organism>
    <name type="scientific">Mycolicibacterium smegmatis</name>
    <name type="common">Mycobacterium smegmatis</name>
    <dbReference type="NCBI Taxonomy" id="1772"/>
    <lineage>
        <taxon>Bacteria</taxon>
        <taxon>Bacillati</taxon>
        <taxon>Actinomycetota</taxon>
        <taxon>Actinomycetes</taxon>
        <taxon>Mycobacteriales</taxon>
        <taxon>Mycobacteriaceae</taxon>
        <taxon>Mycolicibacterium</taxon>
    </lineage>
</organism>
<accession>O30973</accession>
<feature type="chain" id="PRO_0000166740" description="Thioredoxin reductase">
    <location>
        <begin position="1"/>
        <end position="311"/>
    </location>
</feature>
<feature type="binding site" evidence="2">
    <location>
        <begin position="15"/>
        <end position="18"/>
    </location>
    <ligand>
        <name>FAD</name>
        <dbReference type="ChEBI" id="CHEBI:57692"/>
    </ligand>
</feature>
<feature type="binding site" evidence="2">
    <location>
        <begin position="37"/>
        <end position="44"/>
    </location>
    <ligand>
        <name>FAD</name>
        <dbReference type="ChEBI" id="CHEBI:57692"/>
    </ligand>
</feature>
<feature type="binding site" evidence="2">
    <location>
        <position position="53"/>
    </location>
    <ligand>
        <name>FAD</name>
        <dbReference type="ChEBI" id="CHEBI:57692"/>
    </ligand>
</feature>
<feature type="binding site" evidence="2">
    <location>
        <position position="86"/>
    </location>
    <ligand>
        <name>FAD</name>
        <dbReference type="ChEBI" id="CHEBI:57692"/>
    </ligand>
</feature>
<feature type="binding site" evidence="2">
    <location>
        <position position="158"/>
    </location>
    <ligand>
        <name>NADP(+)</name>
        <dbReference type="ChEBI" id="CHEBI:58349"/>
    </ligand>
</feature>
<feature type="binding site" evidence="2">
    <location>
        <position position="177"/>
    </location>
    <ligand>
        <name>NADP(+)</name>
        <dbReference type="ChEBI" id="CHEBI:58349"/>
    </ligand>
</feature>
<feature type="binding site" evidence="2">
    <location>
        <position position="183"/>
    </location>
    <ligand>
        <name>NADP(+)</name>
        <dbReference type="ChEBI" id="CHEBI:58349"/>
    </ligand>
</feature>
<feature type="binding site" evidence="2">
    <location>
        <position position="240"/>
    </location>
    <ligand>
        <name>NADP(+)</name>
        <dbReference type="ChEBI" id="CHEBI:58349"/>
    </ligand>
</feature>
<feature type="binding site" evidence="2">
    <location>
        <position position="260"/>
    </location>
    <ligand>
        <name>NADP(+)</name>
        <dbReference type="ChEBI" id="CHEBI:58349"/>
    </ligand>
</feature>
<feature type="binding site" evidence="2">
    <location>
        <position position="280"/>
    </location>
    <ligand>
        <name>FAD</name>
        <dbReference type="ChEBI" id="CHEBI:57692"/>
    </ligand>
</feature>
<feature type="binding site" evidence="2">
    <location>
        <begin position="287"/>
        <end position="290"/>
    </location>
    <ligand>
        <name>FAD</name>
        <dbReference type="ChEBI" id="CHEBI:57692"/>
    </ligand>
</feature>
<feature type="binding site" evidence="2">
    <location>
        <position position="287"/>
    </location>
    <ligand>
        <name>NADP(+)</name>
        <dbReference type="ChEBI" id="CHEBI:58349"/>
    </ligand>
</feature>
<feature type="disulfide bond" description="Redox-active" evidence="2">
    <location>
        <begin position="137"/>
        <end position="140"/>
    </location>
</feature>